<evidence type="ECO:0000250" key="1">
    <source>
        <dbReference type="UniProtKB" id="P39724"/>
    </source>
</evidence>
<evidence type="ECO:0000250" key="2">
    <source>
        <dbReference type="UniProtKB" id="Q53S33"/>
    </source>
</evidence>
<evidence type="ECO:0000305" key="3"/>
<organism>
    <name type="scientific">Mus musculus</name>
    <name type="common">Mouse</name>
    <dbReference type="NCBI Taxonomy" id="10090"/>
    <lineage>
        <taxon>Eukaryota</taxon>
        <taxon>Metazoa</taxon>
        <taxon>Chordata</taxon>
        <taxon>Craniata</taxon>
        <taxon>Vertebrata</taxon>
        <taxon>Euteleostomi</taxon>
        <taxon>Mammalia</taxon>
        <taxon>Eutheria</taxon>
        <taxon>Euarchontoglires</taxon>
        <taxon>Glires</taxon>
        <taxon>Rodentia</taxon>
        <taxon>Myomorpha</taxon>
        <taxon>Muroidea</taxon>
        <taxon>Muridae</taxon>
        <taxon>Murinae</taxon>
        <taxon>Mus</taxon>
        <taxon>Mus</taxon>
    </lineage>
</organism>
<gene>
    <name type="primary">Bola3</name>
</gene>
<feature type="chain" id="PRO_0000245502" description="BolA-like protein 3">
    <location>
        <begin position="1"/>
        <end position="110"/>
    </location>
</feature>
<sequence>MAAWGPAAAAPLLRGSRGLPLWHCAQRMFASQTEGELKVTQVLKEKFPRATAIQVTDISGGCGAMYEIKIESEEFKEKRTVQQHQMVNQALKEEIKGMHGLRIFTSVPKC</sequence>
<protein>
    <recommendedName>
        <fullName>BolA-like protein 3</fullName>
    </recommendedName>
</protein>
<comment type="function">
    <text evidence="1 2">Acts as a mitochondrial iron-sulfur (Fe-S) cluster assembly factor that facilitates (Fe-S) cluster insertion into a subset of mitochondrial proteins. Probably acts together with NFU1.</text>
</comment>
<comment type="subunit">
    <text evidence="2">Interacts with NFU1.</text>
</comment>
<comment type="subcellular location">
    <subcellularLocation>
        <location evidence="2">Mitochondrion</location>
    </subcellularLocation>
</comment>
<comment type="similarity">
    <text evidence="3">Belongs to the BolA/IbaG family.</text>
</comment>
<proteinExistence type="evidence at protein level"/>
<name>BOLA3_MOUSE</name>
<dbReference type="EMBL" id="AK028102">
    <property type="protein sequence ID" value="BAC25747.1"/>
    <property type="molecule type" value="mRNA"/>
</dbReference>
<dbReference type="EMBL" id="AK131950">
    <property type="protein sequence ID" value="BAE20895.1"/>
    <property type="molecule type" value="mRNA"/>
</dbReference>
<dbReference type="EMBL" id="AK160488">
    <property type="protein sequence ID" value="BAE35819.1"/>
    <property type="molecule type" value="mRNA"/>
</dbReference>
<dbReference type="CCDS" id="CCDS20278.1"/>
<dbReference type="RefSeq" id="NP_780486.1">
    <property type="nucleotide sequence ID" value="NM_175277.5"/>
</dbReference>
<dbReference type="SMR" id="Q8CEI1"/>
<dbReference type="BioGRID" id="219554">
    <property type="interactions" value="4"/>
</dbReference>
<dbReference type="FunCoup" id="Q8CEI1">
    <property type="interactions" value="895"/>
</dbReference>
<dbReference type="STRING" id="10090.ENSMUSP00000118348"/>
<dbReference type="GlyGen" id="Q8CEI1">
    <property type="glycosylation" value="1 site, 1 O-linked glycan (1 site)"/>
</dbReference>
<dbReference type="iPTMnet" id="Q8CEI1"/>
<dbReference type="PhosphoSitePlus" id="Q8CEI1"/>
<dbReference type="jPOST" id="Q8CEI1"/>
<dbReference type="PaxDb" id="10090-ENSMUSP00000118348"/>
<dbReference type="ProteomicsDB" id="273835"/>
<dbReference type="Pumba" id="Q8CEI1"/>
<dbReference type="Antibodypedia" id="65208">
    <property type="antibodies" value="63 antibodies from 19 providers"/>
</dbReference>
<dbReference type="Ensembl" id="ENSMUST00000136501.2">
    <property type="protein sequence ID" value="ENSMUSP00000118348.2"/>
    <property type="gene ID" value="ENSMUSG00000045160.15"/>
</dbReference>
<dbReference type="GeneID" id="78653"/>
<dbReference type="KEGG" id="mmu:78653"/>
<dbReference type="UCSC" id="uc009cnh.1">
    <property type="organism name" value="mouse"/>
</dbReference>
<dbReference type="AGR" id="MGI:1925903"/>
<dbReference type="CTD" id="388962"/>
<dbReference type="MGI" id="MGI:1925903">
    <property type="gene designation" value="Bola3"/>
</dbReference>
<dbReference type="VEuPathDB" id="HostDB:ENSMUSG00000045160"/>
<dbReference type="eggNOG" id="KOG3348">
    <property type="taxonomic scope" value="Eukaryota"/>
</dbReference>
<dbReference type="GeneTree" id="ENSGT00390000013048"/>
<dbReference type="InParanoid" id="Q8CEI1"/>
<dbReference type="OMA" id="EIQNMHG"/>
<dbReference type="PhylomeDB" id="Q8CEI1"/>
<dbReference type="TreeFam" id="TF332952"/>
<dbReference type="BioGRID-ORCS" id="78653">
    <property type="hits" value="12 hits in 76 CRISPR screens"/>
</dbReference>
<dbReference type="ChiTaRS" id="Bola3">
    <property type="organism name" value="mouse"/>
</dbReference>
<dbReference type="PRO" id="PR:Q8CEI1"/>
<dbReference type="Proteomes" id="UP000000589">
    <property type="component" value="Chromosome 6"/>
</dbReference>
<dbReference type="RNAct" id="Q8CEI1">
    <property type="molecule type" value="protein"/>
</dbReference>
<dbReference type="Bgee" id="ENSMUSG00000045160">
    <property type="expression patterns" value="Expressed in digastric muscle group and 232 other cell types or tissues"/>
</dbReference>
<dbReference type="ExpressionAtlas" id="Q8CEI1">
    <property type="expression patterns" value="baseline and differential"/>
</dbReference>
<dbReference type="GO" id="GO:1990229">
    <property type="term" value="C:iron-sulfur cluster assembly complex"/>
    <property type="evidence" value="ECO:0007669"/>
    <property type="project" value="Ensembl"/>
</dbReference>
<dbReference type="GO" id="GO:0005739">
    <property type="term" value="C:mitochondrion"/>
    <property type="evidence" value="ECO:0000315"/>
    <property type="project" value="MGI"/>
</dbReference>
<dbReference type="GO" id="GO:0016604">
    <property type="term" value="C:nuclear body"/>
    <property type="evidence" value="ECO:0007669"/>
    <property type="project" value="Ensembl"/>
</dbReference>
<dbReference type="GO" id="GO:1990845">
    <property type="term" value="P:adaptive thermogenesis"/>
    <property type="evidence" value="ECO:0000315"/>
    <property type="project" value="MGI"/>
</dbReference>
<dbReference type="GO" id="GO:0097009">
    <property type="term" value="P:energy homeostasis"/>
    <property type="evidence" value="ECO:0000315"/>
    <property type="project" value="MGI"/>
</dbReference>
<dbReference type="GO" id="GO:0006006">
    <property type="term" value="P:glucose metabolic process"/>
    <property type="evidence" value="ECO:0000315"/>
    <property type="project" value="MGI"/>
</dbReference>
<dbReference type="GO" id="GO:0016226">
    <property type="term" value="P:iron-sulfur cluster assembly"/>
    <property type="evidence" value="ECO:0000315"/>
    <property type="project" value="MGI"/>
</dbReference>
<dbReference type="GO" id="GO:1903442">
    <property type="term" value="P:response to lipoic acid"/>
    <property type="evidence" value="ECO:0000315"/>
    <property type="project" value="MGI"/>
</dbReference>
<dbReference type="FunFam" id="3.30.300.90:FF:000003">
    <property type="entry name" value="BolA family member 3"/>
    <property type="match status" value="1"/>
</dbReference>
<dbReference type="Gene3D" id="3.30.300.90">
    <property type="entry name" value="BolA-like"/>
    <property type="match status" value="1"/>
</dbReference>
<dbReference type="InterPro" id="IPR002634">
    <property type="entry name" value="BolA"/>
</dbReference>
<dbReference type="InterPro" id="IPR036065">
    <property type="entry name" value="BolA-like_sf"/>
</dbReference>
<dbReference type="InterPro" id="IPR052275">
    <property type="entry name" value="Mt_Fe-S_assembly_factor"/>
</dbReference>
<dbReference type="PANTHER" id="PTHR46188">
    <property type="entry name" value="BOLA-LIKE PROTEIN 3"/>
    <property type="match status" value="1"/>
</dbReference>
<dbReference type="PANTHER" id="PTHR46188:SF1">
    <property type="entry name" value="BOLA-LIKE PROTEIN 3"/>
    <property type="match status" value="1"/>
</dbReference>
<dbReference type="Pfam" id="PF01722">
    <property type="entry name" value="BolA"/>
    <property type="match status" value="1"/>
</dbReference>
<dbReference type="PIRSF" id="PIRSF003113">
    <property type="entry name" value="BolA"/>
    <property type="match status" value="1"/>
</dbReference>
<dbReference type="SUPFAM" id="SSF82657">
    <property type="entry name" value="BolA-like"/>
    <property type="match status" value="1"/>
</dbReference>
<accession>Q8CEI1</accession>
<reference key="1">
    <citation type="journal article" date="2005" name="Science">
        <title>The transcriptional landscape of the mammalian genome.</title>
        <authorList>
            <person name="Carninci P."/>
            <person name="Kasukawa T."/>
            <person name="Katayama S."/>
            <person name="Gough J."/>
            <person name="Frith M.C."/>
            <person name="Maeda N."/>
            <person name="Oyama R."/>
            <person name="Ravasi T."/>
            <person name="Lenhard B."/>
            <person name="Wells C."/>
            <person name="Kodzius R."/>
            <person name="Shimokawa K."/>
            <person name="Bajic V.B."/>
            <person name="Brenner S.E."/>
            <person name="Batalov S."/>
            <person name="Forrest A.R."/>
            <person name="Zavolan M."/>
            <person name="Davis M.J."/>
            <person name="Wilming L.G."/>
            <person name="Aidinis V."/>
            <person name="Allen J.E."/>
            <person name="Ambesi-Impiombato A."/>
            <person name="Apweiler R."/>
            <person name="Aturaliya R.N."/>
            <person name="Bailey T.L."/>
            <person name="Bansal M."/>
            <person name="Baxter L."/>
            <person name="Beisel K.W."/>
            <person name="Bersano T."/>
            <person name="Bono H."/>
            <person name="Chalk A.M."/>
            <person name="Chiu K.P."/>
            <person name="Choudhary V."/>
            <person name="Christoffels A."/>
            <person name="Clutterbuck D.R."/>
            <person name="Crowe M.L."/>
            <person name="Dalla E."/>
            <person name="Dalrymple B.P."/>
            <person name="de Bono B."/>
            <person name="Della Gatta G."/>
            <person name="di Bernardo D."/>
            <person name="Down T."/>
            <person name="Engstrom P."/>
            <person name="Fagiolini M."/>
            <person name="Faulkner G."/>
            <person name="Fletcher C.F."/>
            <person name="Fukushima T."/>
            <person name="Furuno M."/>
            <person name="Futaki S."/>
            <person name="Gariboldi M."/>
            <person name="Georgii-Hemming P."/>
            <person name="Gingeras T.R."/>
            <person name="Gojobori T."/>
            <person name="Green R.E."/>
            <person name="Gustincich S."/>
            <person name="Harbers M."/>
            <person name="Hayashi Y."/>
            <person name="Hensch T.K."/>
            <person name="Hirokawa N."/>
            <person name="Hill D."/>
            <person name="Huminiecki L."/>
            <person name="Iacono M."/>
            <person name="Ikeo K."/>
            <person name="Iwama A."/>
            <person name="Ishikawa T."/>
            <person name="Jakt M."/>
            <person name="Kanapin A."/>
            <person name="Katoh M."/>
            <person name="Kawasawa Y."/>
            <person name="Kelso J."/>
            <person name="Kitamura H."/>
            <person name="Kitano H."/>
            <person name="Kollias G."/>
            <person name="Krishnan S.P."/>
            <person name="Kruger A."/>
            <person name="Kummerfeld S.K."/>
            <person name="Kurochkin I.V."/>
            <person name="Lareau L.F."/>
            <person name="Lazarevic D."/>
            <person name="Lipovich L."/>
            <person name="Liu J."/>
            <person name="Liuni S."/>
            <person name="McWilliam S."/>
            <person name="Madan Babu M."/>
            <person name="Madera M."/>
            <person name="Marchionni L."/>
            <person name="Matsuda H."/>
            <person name="Matsuzawa S."/>
            <person name="Miki H."/>
            <person name="Mignone F."/>
            <person name="Miyake S."/>
            <person name="Morris K."/>
            <person name="Mottagui-Tabar S."/>
            <person name="Mulder N."/>
            <person name="Nakano N."/>
            <person name="Nakauchi H."/>
            <person name="Ng P."/>
            <person name="Nilsson R."/>
            <person name="Nishiguchi S."/>
            <person name="Nishikawa S."/>
            <person name="Nori F."/>
            <person name="Ohara O."/>
            <person name="Okazaki Y."/>
            <person name="Orlando V."/>
            <person name="Pang K.C."/>
            <person name="Pavan W.J."/>
            <person name="Pavesi G."/>
            <person name="Pesole G."/>
            <person name="Petrovsky N."/>
            <person name="Piazza S."/>
            <person name="Reed J."/>
            <person name="Reid J.F."/>
            <person name="Ring B.Z."/>
            <person name="Ringwald M."/>
            <person name="Rost B."/>
            <person name="Ruan Y."/>
            <person name="Salzberg S.L."/>
            <person name="Sandelin A."/>
            <person name="Schneider C."/>
            <person name="Schoenbach C."/>
            <person name="Sekiguchi K."/>
            <person name="Semple C.A."/>
            <person name="Seno S."/>
            <person name="Sessa L."/>
            <person name="Sheng Y."/>
            <person name="Shibata Y."/>
            <person name="Shimada H."/>
            <person name="Shimada K."/>
            <person name="Silva D."/>
            <person name="Sinclair B."/>
            <person name="Sperling S."/>
            <person name="Stupka E."/>
            <person name="Sugiura K."/>
            <person name="Sultana R."/>
            <person name="Takenaka Y."/>
            <person name="Taki K."/>
            <person name="Tammoja K."/>
            <person name="Tan S.L."/>
            <person name="Tang S."/>
            <person name="Taylor M.S."/>
            <person name="Tegner J."/>
            <person name="Teichmann S.A."/>
            <person name="Ueda H.R."/>
            <person name="van Nimwegen E."/>
            <person name="Verardo R."/>
            <person name="Wei C.L."/>
            <person name="Yagi K."/>
            <person name="Yamanishi H."/>
            <person name="Zabarovsky E."/>
            <person name="Zhu S."/>
            <person name="Zimmer A."/>
            <person name="Hide W."/>
            <person name="Bult C."/>
            <person name="Grimmond S.M."/>
            <person name="Teasdale R.D."/>
            <person name="Liu E.T."/>
            <person name="Brusic V."/>
            <person name="Quackenbush J."/>
            <person name="Wahlestedt C."/>
            <person name="Mattick J.S."/>
            <person name="Hume D.A."/>
            <person name="Kai C."/>
            <person name="Sasaki D."/>
            <person name="Tomaru Y."/>
            <person name="Fukuda S."/>
            <person name="Kanamori-Katayama M."/>
            <person name="Suzuki M."/>
            <person name="Aoki J."/>
            <person name="Arakawa T."/>
            <person name="Iida J."/>
            <person name="Imamura K."/>
            <person name="Itoh M."/>
            <person name="Kato T."/>
            <person name="Kawaji H."/>
            <person name="Kawagashira N."/>
            <person name="Kawashima T."/>
            <person name="Kojima M."/>
            <person name="Kondo S."/>
            <person name="Konno H."/>
            <person name="Nakano K."/>
            <person name="Ninomiya N."/>
            <person name="Nishio T."/>
            <person name="Okada M."/>
            <person name="Plessy C."/>
            <person name="Shibata K."/>
            <person name="Shiraki T."/>
            <person name="Suzuki S."/>
            <person name="Tagami M."/>
            <person name="Waki K."/>
            <person name="Watahiki A."/>
            <person name="Okamura-Oho Y."/>
            <person name="Suzuki H."/>
            <person name="Kawai J."/>
            <person name="Hayashizaki Y."/>
        </authorList>
    </citation>
    <scope>NUCLEOTIDE SEQUENCE [LARGE SCALE MRNA]</scope>
    <source>
        <strain>C57BL/6J</strain>
        <tissue>Pancreas</tissue>
        <tissue>Stomach</tissue>
    </source>
</reference>
<reference key="2">
    <citation type="journal article" date="2010" name="Cell">
        <title>A tissue-specific atlas of mouse protein phosphorylation and expression.</title>
        <authorList>
            <person name="Huttlin E.L."/>
            <person name="Jedrychowski M.P."/>
            <person name="Elias J.E."/>
            <person name="Goswami T."/>
            <person name="Rad R."/>
            <person name="Beausoleil S.A."/>
            <person name="Villen J."/>
            <person name="Haas W."/>
            <person name="Sowa M.E."/>
            <person name="Gygi S.P."/>
        </authorList>
    </citation>
    <scope>IDENTIFICATION BY MASS SPECTROMETRY [LARGE SCALE ANALYSIS]</scope>
    <source>
        <tissue>Brown adipose tissue</tissue>
        <tissue>Heart</tissue>
        <tissue>Kidney</tissue>
        <tissue>Liver</tissue>
        <tissue>Testis</tissue>
    </source>
</reference>
<keyword id="KW-0496">Mitochondrion</keyword>
<keyword id="KW-1185">Reference proteome</keyword>